<gene>
    <name evidence="1" type="primary">atpD</name>
    <name type="ordered locus">ECH74115_5168</name>
</gene>
<evidence type="ECO:0000255" key="1">
    <source>
        <dbReference type="HAMAP-Rule" id="MF_01347"/>
    </source>
</evidence>
<keyword id="KW-0066">ATP synthesis</keyword>
<keyword id="KW-0067">ATP-binding</keyword>
<keyword id="KW-0997">Cell inner membrane</keyword>
<keyword id="KW-1003">Cell membrane</keyword>
<keyword id="KW-0139">CF(1)</keyword>
<keyword id="KW-0375">Hydrogen ion transport</keyword>
<keyword id="KW-0406">Ion transport</keyword>
<keyword id="KW-0472">Membrane</keyword>
<keyword id="KW-0547">Nucleotide-binding</keyword>
<keyword id="KW-1278">Translocase</keyword>
<keyword id="KW-0813">Transport</keyword>
<accession>B5YXD6</accession>
<sequence>MATGKIVQVIGAVVDVEFPQDAVPRVYDALEVQNGNERLVLEVQQQLGGGIVRTIAMGSSDGLRRGLDVKDLEHPIEVPVGKATLGRIMNVLGEPVDMKGEIGEEERWAIHRAAPSYEELSNSQELLETGIKVIDLMCPFAKGGKVGLFGGAGVGKTVNMMELIRNIAIEHSGYSVFAGVGERTREGNDFYHEMTDSNVIDKVSLVYGQMNEPPGNRLRVALTGLTMAEKFRDEGRDVLLFVDNIYRYTLAGTEVSALLGRMPSAVGYQPTLAEEMGVLQERITSTKTGSITSVQAVYVPADDLTDPSPATTFAHLDATVVLSRQIASLGIYPAVDPLDSTSRQLDPLVVGQEHYDTARGVQSILQRYQELKDIIAILGMDELSEEDKLVVARARKIQRFLSQPFFVAEVFTGSPGKYVSLKDTIRGFKGIMEGEYDHLPEQAFYMVGSIEEAVEKAKKL</sequence>
<organism>
    <name type="scientific">Escherichia coli O157:H7 (strain EC4115 / EHEC)</name>
    <dbReference type="NCBI Taxonomy" id="444450"/>
    <lineage>
        <taxon>Bacteria</taxon>
        <taxon>Pseudomonadati</taxon>
        <taxon>Pseudomonadota</taxon>
        <taxon>Gammaproteobacteria</taxon>
        <taxon>Enterobacterales</taxon>
        <taxon>Enterobacteriaceae</taxon>
        <taxon>Escherichia</taxon>
    </lineage>
</organism>
<proteinExistence type="inferred from homology"/>
<reference key="1">
    <citation type="journal article" date="2011" name="Proc. Natl. Acad. Sci. U.S.A.">
        <title>Genomic anatomy of Escherichia coli O157:H7 outbreaks.</title>
        <authorList>
            <person name="Eppinger M."/>
            <person name="Mammel M.K."/>
            <person name="Leclerc J.E."/>
            <person name="Ravel J."/>
            <person name="Cebula T.A."/>
        </authorList>
    </citation>
    <scope>NUCLEOTIDE SEQUENCE [LARGE SCALE GENOMIC DNA]</scope>
    <source>
        <strain>EC4115 / EHEC</strain>
    </source>
</reference>
<dbReference type="EC" id="7.1.2.2" evidence="1"/>
<dbReference type="EMBL" id="CP001164">
    <property type="protein sequence ID" value="ACI39447.1"/>
    <property type="molecule type" value="Genomic_DNA"/>
</dbReference>
<dbReference type="RefSeq" id="WP_000190506.1">
    <property type="nucleotide sequence ID" value="NC_011353.1"/>
</dbReference>
<dbReference type="SMR" id="B5YXD6"/>
<dbReference type="GeneID" id="93778235"/>
<dbReference type="KEGG" id="ecf:ECH74115_5168"/>
<dbReference type="HOGENOM" id="CLU_022398_0_2_6"/>
<dbReference type="GO" id="GO:0005886">
    <property type="term" value="C:plasma membrane"/>
    <property type="evidence" value="ECO:0007669"/>
    <property type="project" value="UniProtKB-SubCell"/>
</dbReference>
<dbReference type="GO" id="GO:0045259">
    <property type="term" value="C:proton-transporting ATP synthase complex"/>
    <property type="evidence" value="ECO:0007669"/>
    <property type="project" value="UniProtKB-KW"/>
</dbReference>
<dbReference type="GO" id="GO:0005524">
    <property type="term" value="F:ATP binding"/>
    <property type="evidence" value="ECO:0007669"/>
    <property type="project" value="UniProtKB-UniRule"/>
</dbReference>
<dbReference type="GO" id="GO:0016887">
    <property type="term" value="F:ATP hydrolysis activity"/>
    <property type="evidence" value="ECO:0007669"/>
    <property type="project" value="InterPro"/>
</dbReference>
<dbReference type="GO" id="GO:0046933">
    <property type="term" value="F:proton-transporting ATP synthase activity, rotational mechanism"/>
    <property type="evidence" value="ECO:0007669"/>
    <property type="project" value="UniProtKB-UniRule"/>
</dbReference>
<dbReference type="CDD" id="cd18110">
    <property type="entry name" value="ATP-synt_F1_beta_C"/>
    <property type="match status" value="1"/>
</dbReference>
<dbReference type="CDD" id="cd18115">
    <property type="entry name" value="ATP-synt_F1_beta_N"/>
    <property type="match status" value="1"/>
</dbReference>
<dbReference type="CDD" id="cd01133">
    <property type="entry name" value="F1-ATPase_beta_CD"/>
    <property type="match status" value="1"/>
</dbReference>
<dbReference type="FunFam" id="1.10.1140.10:FF:000001">
    <property type="entry name" value="ATP synthase subunit beta"/>
    <property type="match status" value="1"/>
</dbReference>
<dbReference type="FunFam" id="2.40.10.170:FF:000003">
    <property type="entry name" value="ATP synthase subunit beta"/>
    <property type="match status" value="1"/>
</dbReference>
<dbReference type="FunFam" id="3.40.50.300:FF:000004">
    <property type="entry name" value="ATP synthase subunit beta"/>
    <property type="match status" value="1"/>
</dbReference>
<dbReference type="Gene3D" id="2.40.10.170">
    <property type="match status" value="1"/>
</dbReference>
<dbReference type="Gene3D" id="1.10.1140.10">
    <property type="entry name" value="Bovine Mitochondrial F1-atpase, Atp Synthase Beta Chain, Chain D, domain 3"/>
    <property type="match status" value="1"/>
</dbReference>
<dbReference type="Gene3D" id="3.40.50.300">
    <property type="entry name" value="P-loop containing nucleotide triphosphate hydrolases"/>
    <property type="match status" value="1"/>
</dbReference>
<dbReference type="HAMAP" id="MF_01347">
    <property type="entry name" value="ATP_synth_beta_bact"/>
    <property type="match status" value="1"/>
</dbReference>
<dbReference type="InterPro" id="IPR003593">
    <property type="entry name" value="AAA+_ATPase"/>
</dbReference>
<dbReference type="InterPro" id="IPR055190">
    <property type="entry name" value="ATP-synt_VA_C"/>
</dbReference>
<dbReference type="InterPro" id="IPR005722">
    <property type="entry name" value="ATP_synth_F1_bsu"/>
</dbReference>
<dbReference type="InterPro" id="IPR020003">
    <property type="entry name" value="ATPase_a/bsu_AS"/>
</dbReference>
<dbReference type="InterPro" id="IPR050053">
    <property type="entry name" value="ATPase_alpha/beta_chains"/>
</dbReference>
<dbReference type="InterPro" id="IPR004100">
    <property type="entry name" value="ATPase_F1/V1/A1_a/bsu_N"/>
</dbReference>
<dbReference type="InterPro" id="IPR036121">
    <property type="entry name" value="ATPase_F1/V1/A1_a/bsu_N_sf"/>
</dbReference>
<dbReference type="InterPro" id="IPR000194">
    <property type="entry name" value="ATPase_F1/V1/A1_a/bsu_nucl-bd"/>
</dbReference>
<dbReference type="InterPro" id="IPR024034">
    <property type="entry name" value="ATPase_F1/V1_b/a_C"/>
</dbReference>
<dbReference type="InterPro" id="IPR027417">
    <property type="entry name" value="P-loop_NTPase"/>
</dbReference>
<dbReference type="NCBIfam" id="TIGR01039">
    <property type="entry name" value="atpD"/>
    <property type="match status" value="1"/>
</dbReference>
<dbReference type="PANTHER" id="PTHR15184">
    <property type="entry name" value="ATP SYNTHASE"/>
    <property type="match status" value="1"/>
</dbReference>
<dbReference type="PANTHER" id="PTHR15184:SF71">
    <property type="entry name" value="ATP SYNTHASE SUBUNIT BETA, MITOCHONDRIAL"/>
    <property type="match status" value="1"/>
</dbReference>
<dbReference type="Pfam" id="PF00006">
    <property type="entry name" value="ATP-synt_ab"/>
    <property type="match status" value="1"/>
</dbReference>
<dbReference type="Pfam" id="PF02874">
    <property type="entry name" value="ATP-synt_ab_N"/>
    <property type="match status" value="1"/>
</dbReference>
<dbReference type="Pfam" id="PF22919">
    <property type="entry name" value="ATP-synt_VA_C"/>
    <property type="match status" value="1"/>
</dbReference>
<dbReference type="SMART" id="SM00382">
    <property type="entry name" value="AAA"/>
    <property type="match status" value="1"/>
</dbReference>
<dbReference type="SUPFAM" id="SSF47917">
    <property type="entry name" value="C-terminal domain of alpha and beta subunits of F1 ATP synthase"/>
    <property type="match status" value="1"/>
</dbReference>
<dbReference type="SUPFAM" id="SSF50615">
    <property type="entry name" value="N-terminal domain of alpha and beta subunits of F1 ATP synthase"/>
    <property type="match status" value="1"/>
</dbReference>
<dbReference type="SUPFAM" id="SSF52540">
    <property type="entry name" value="P-loop containing nucleoside triphosphate hydrolases"/>
    <property type="match status" value="1"/>
</dbReference>
<dbReference type="PROSITE" id="PS00152">
    <property type="entry name" value="ATPASE_ALPHA_BETA"/>
    <property type="match status" value="1"/>
</dbReference>
<comment type="function">
    <text evidence="1">Produces ATP from ADP in the presence of a proton gradient across the membrane. The catalytic sites are hosted primarily by the beta subunits.</text>
</comment>
<comment type="catalytic activity">
    <reaction evidence="1">
        <text>ATP + H2O + 4 H(+)(in) = ADP + phosphate + 5 H(+)(out)</text>
        <dbReference type="Rhea" id="RHEA:57720"/>
        <dbReference type="ChEBI" id="CHEBI:15377"/>
        <dbReference type="ChEBI" id="CHEBI:15378"/>
        <dbReference type="ChEBI" id="CHEBI:30616"/>
        <dbReference type="ChEBI" id="CHEBI:43474"/>
        <dbReference type="ChEBI" id="CHEBI:456216"/>
        <dbReference type="EC" id="7.1.2.2"/>
    </reaction>
</comment>
<comment type="subunit">
    <text evidence="1">F-type ATPases have 2 components, CF(1) - the catalytic core - and CF(0) - the membrane proton channel. CF(1) has five subunits: alpha(3), beta(3), gamma(1), delta(1), epsilon(1). CF(0) has three main subunits: a(1), b(2) and c(9-12). The alpha and beta chains form an alternating ring which encloses part of the gamma chain. CF(1) is attached to CF(0) by a central stalk formed by the gamma and epsilon chains, while a peripheral stalk is formed by the delta and b chains.</text>
</comment>
<comment type="subcellular location">
    <subcellularLocation>
        <location evidence="1">Cell inner membrane</location>
        <topology evidence="1">Peripheral membrane protein</topology>
    </subcellularLocation>
</comment>
<comment type="similarity">
    <text evidence="1">Belongs to the ATPase alpha/beta chains family.</text>
</comment>
<name>ATPB_ECO5E</name>
<protein>
    <recommendedName>
        <fullName evidence="1">ATP synthase subunit beta</fullName>
        <ecNumber evidence="1">7.1.2.2</ecNumber>
    </recommendedName>
    <alternativeName>
        <fullName evidence="1">ATP synthase F1 sector subunit beta</fullName>
    </alternativeName>
    <alternativeName>
        <fullName evidence="1">F-ATPase subunit beta</fullName>
    </alternativeName>
</protein>
<feature type="chain" id="PRO_1000143500" description="ATP synthase subunit beta">
    <location>
        <begin position="1"/>
        <end position="460"/>
    </location>
</feature>
<feature type="binding site" evidence="1">
    <location>
        <begin position="150"/>
        <end position="157"/>
    </location>
    <ligand>
        <name>ATP</name>
        <dbReference type="ChEBI" id="CHEBI:30616"/>
    </ligand>
</feature>